<sequence length="194" mass="21503">MSLVPVVVEQTNRGERSYDIYSRLLKDRIIMLSEEVNDTTASLIVAQLLFLEAEDPDKDIHLYINSPGGSITSGMAIYDTMQYIKPDVSTICVGMAASMGAFLLAAGAKGKRYALPNSEVMIHQPLGGFRGQATDIGIHAERILKMKKKLNTILSDRTGKPLEQVELDTERDHFLSAEEAKEYGLIDEVIDKKK</sequence>
<protein>
    <recommendedName>
        <fullName evidence="1">ATP-dependent Clp protease proteolytic subunit</fullName>
        <ecNumber evidence="1">3.4.21.92</ecNumber>
    </recommendedName>
    <alternativeName>
        <fullName evidence="1">Endopeptidase Clp</fullName>
    </alternativeName>
</protein>
<dbReference type="EC" id="3.4.21.92" evidence="1"/>
<dbReference type="EMBL" id="CP000727">
    <property type="protein sequence ID" value="ABS35938.1"/>
    <property type="molecule type" value="Genomic_DNA"/>
</dbReference>
<dbReference type="EMBL" id="AM412317">
    <property type="protein sequence ID" value="CAL84793.1"/>
    <property type="molecule type" value="Genomic_DNA"/>
</dbReference>
<dbReference type="RefSeq" id="WP_003357557.1">
    <property type="nucleotide sequence ID" value="NC_009698.1"/>
</dbReference>
<dbReference type="RefSeq" id="YP_001255721.1">
    <property type="nucleotide sequence ID" value="NC_009495.1"/>
</dbReference>
<dbReference type="RefSeq" id="YP_001388961.1">
    <property type="nucleotide sequence ID" value="NC_009698.1"/>
</dbReference>
<dbReference type="SMR" id="A5I6W1"/>
<dbReference type="MEROPS" id="S14.001"/>
<dbReference type="GeneID" id="5187372"/>
<dbReference type="KEGG" id="cbh:CLC_3142"/>
<dbReference type="KEGG" id="cbo:CBO3231"/>
<dbReference type="PATRIC" id="fig|413999.7.peg.3210"/>
<dbReference type="HOGENOM" id="CLU_058707_3_2_9"/>
<dbReference type="PRO" id="PR:A5I6W1"/>
<dbReference type="Proteomes" id="UP000001986">
    <property type="component" value="Chromosome"/>
</dbReference>
<dbReference type="GO" id="GO:0005737">
    <property type="term" value="C:cytoplasm"/>
    <property type="evidence" value="ECO:0007669"/>
    <property type="project" value="UniProtKB-SubCell"/>
</dbReference>
<dbReference type="GO" id="GO:0009368">
    <property type="term" value="C:endopeptidase Clp complex"/>
    <property type="evidence" value="ECO:0000318"/>
    <property type="project" value="GO_Central"/>
</dbReference>
<dbReference type="GO" id="GO:0004176">
    <property type="term" value="F:ATP-dependent peptidase activity"/>
    <property type="evidence" value="ECO:0000318"/>
    <property type="project" value="GO_Central"/>
</dbReference>
<dbReference type="GO" id="GO:0051117">
    <property type="term" value="F:ATPase binding"/>
    <property type="evidence" value="ECO:0000318"/>
    <property type="project" value="GO_Central"/>
</dbReference>
<dbReference type="GO" id="GO:0004252">
    <property type="term" value="F:serine-type endopeptidase activity"/>
    <property type="evidence" value="ECO:0000318"/>
    <property type="project" value="GO_Central"/>
</dbReference>
<dbReference type="GO" id="GO:0006515">
    <property type="term" value="P:protein quality control for misfolded or incompletely synthesized proteins"/>
    <property type="evidence" value="ECO:0000318"/>
    <property type="project" value="GO_Central"/>
</dbReference>
<dbReference type="CDD" id="cd07017">
    <property type="entry name" value="S14_ClpP_2"/>
    <property type="match status" value="1"/>
</dbReference>
<dbReference type="FunFam" id="3.90.226.10:FF:000001">
    <property type="entry name" value="ATP-dependent Clp protease proteolytic subunit"/>
    <property type="match status" value="1"/>
</dbReference>
<dbReference type="Gene3D" id="3.90.226.10">
    <property type="entry name" value="2-enoyl-CoA Hydratase, Chain A, domain 1"/>
    <property type="match status" value="1"/>
</dbReference>
<dbReference type="HAMAP" id="MF_00444">
    <property type="entry name" value="ClpP"/>
    <property type="match status" value="1"/>
</dbReference>
<dbReference type="InterPro" id="IPR001907">
    <property type="entry name" value="ClpP"/>
</dbReference>
<dbReference type="InterPro" id="IPR029045">
    <property type="entry name" value="ClpP/crotonase-like_dom_sf"/>
</dbReference>
<dbReference type="InterPro" id="IPR023562">
    <property type="entry name" value="ClpP/TepA"/>
</dbReference>
<dbReference type="InterPro" id="IPR033135">
    <property type="entry name" value="ClpP_His_AS"/>
</dbReference>
<dbReference type="InterPro" id="IPR018215">
    <property type="entry name" value="ClpP_Ser_AS"/>
</dbReference>
<dbReference type="NCBIfam" id="TIGR00493">
    <property type="entry name" value="clpP"/>
    <property type="match status" value="1"/>
</dbReference>
<dbReference type="NCBIfam" id="NF001368">
    <property type="entry name" value="PRK00277.1"/>
    <property type="match status" value="1"/>
</dbReference>
<dbReference type="NCBIfam" id="NF009205">
    <property type="entry name" value="PRK12553.1"/>
    <property type="match status" value="1"/>
</dbReference>
<dbReference type="PANTHER" id="PTHR10381">
    <property type="entry name" value="ATP-DEPENDENT CLP PROTEASE PROTEOLYTIC SUBUNIT"/>
    <property type="match status" value="1"/>
</dbReference>
<dbReference type="PANTHER" id="PTHR10381:SF70">
    <property type="entry name" value="ATP-DEPENDENT CLP PROTEASE PROTEOLYTIC SUBUNIT"/>
    <property type="match status" value="1"/>
</dbReference>
<dbReference type="Pfam" id="PF00574">
    <property type="entry name" value="CLP_protease"/>
    <property type="match status" value="1"/>
</dbReference>
<dbReference type="PRINTS" id="PR00127">
    <property type="entry name" value="CLPPROTEASEP"/>
</dbReference>
<dbReference type="SUPFAM" id="SSF52096">
    <property type="entry name" value="ClpP/crotonase"/>
    <property type="match status" value="1"/>
</dbReference>
<dbReference type="PROSITE" id="PS00382">
    <property type="entry name" value="CLP_PROTEASE_HIS"/>
    <property type="match status" value="1"/>
</dbReference>
<dbReference type="PROSITE" id="PS00381">
    <property type="entry name" value="CLP_PROTEASE_SER"/>
    <property type="match status" value="1"/>
</dbReference>
<name>CLPP_CLOBH</name>
<reference key="1">
    <citation type="journal article" date="2007" name="Genome Res.">
        <title>Genome sequence of a proteolytic (Group I) Clostridium botulinum strain Hall A and comparative analysis of the clostridial genomes.</title>
        <authorList>
            <person name="Sebaihia M."/>
            <person name="Peck M.W."/>
            <person name="Minton N.P."/>
            <person name="Thomson N.R."/>
            <person name="Holden M.T.G."/>
            <person name="Mitchell W.J."/>
            <person name="Carter A.T."/>
            <person name="Bentley S.D."/>
            <person name="Mason D.R."/>
            <person name="Crossman L."/>
            <person name="Paul C.J."/>
            <person name="Ivens A."/>
            <person name="Wells-Bennik M.H.J."/>
            <person name="Davis I.J."/>
            <person name="Cerdeno-Tarraga A.M."/>
            <person name="Churcher C."/>
            <person name="Quail M.A."/>
            <person name="Chillingworth T."/>
            <person name="Feltwell T."/>
            <person name="Fraser A."/>
            <person name="Goodhead I."/>
            <person name="Hance Z."/>
            <person name="Jagels K."/>
            <person name="Larke N."/>
            <person name="Maddison M."/>
            <person name="Moule S."/>
            <person name="Mungall K."/>
            <person name="Norbertczak H."/>
            <person name="Rabbinowitsch E."/>
            <person name="Sanders M."/>
            <person name="Simmonds M."/>
            <person name="White B."/>
            <person name="Whithead S."/>
            <person name="Parkhill J."/>
        </authorList>
    </citation>
    <scope>NUCLEOTIDE SEQUENCE [LARGE SCALE GENOMIC DNA]</scope>
    <source>
        <strain>Hall / ATCC 3502 / NCTC 13319 / Type A</strain>
    </source>
</reference>
<reference key="2">
    <citation type="journal article" date="2007" name="PLoS ONE">
        <title>Analysis of the neurotoxin complex genes in Clostridium botulinum A1-A4 and B1 strains: BoNT/A3, /Ba4 and /B1 clusters are located within plasmids.</title>
        <authorList>
            <person name="Smith T.J."/>
            <person name="Hill K.K."/>
            <person name="Foley B.T."/>
            <person name="Detter J.C."/>
            <person name="Munk A.C."/>
            <person name="Bruce D.C."/>
            <person name="Doggett N.A."/>
            <person name="Smith L.A."/>
            <person name="Marks J.D."/>
            <person name="Xie G."/>
            <person name="Brettin T.S."/>
        </authorList>
    </citation>
    <scope>NUCLEOTIDE SEQUENCE [LARGE SCALE GENOMIC DNA]</scope>
    <source>
        <strain>Hall / ATCC 3502 / NCTC 13319 / Type A</strain>
    </source>
</reference>
<comment type="function">
    <text evidence="1">Cleaves peptides in various proteins in a process that requires ATP hydrolysis. Has a chymotrypsin-like activity. Plays a major role in the degradation of misfolded proteins.</text>
</comment>
<comment type="catalytic activity">
    <reaction evidence="1">
        <text>Hydrolysis of proteins to small peptides in the presence of ATP and magnesium. alpha-casein is the usual test substrate. In the absence of ATP, only oligopeptides shorter than five residues are hydrolyzed (such as succinyl-Leu-Tyr-|-NHMec, and Leu-Tyr-Leu-|-Tyr-Trp, in which cleavage of the -Tyr-|-Leu- and -Tyr-|-Trp bonds also occurs).</text>
        <dbReference type="EC" id="3.4.21.92"/>
    </reaction>
</comment>
<comment type="subunit">
    <text evidence="1">Fourteen ClpP subunits assemble into 2 heptameric rings which stack back to back to give a disk-like structure with a central cavity, resembling the structure of eukaryotic proteasomes.</text>
</comment>
<comment type="subcellular location">
    <subcellularLocation>
        <location evidence="1">Cytoplasm</location>
    </subcellularLocation>
</comment>
<comment type="similarity">
    <text evidence="1">Belongs to the peptidase S14 family.</text>
</comment>
<accession>A5I6W1</accession>
<accession>A7G846</accession>
<keyword id="KW-0963">Cytoplasm</keyword>
<keyword id="KW-0378">Hydrolase</keyword>
<keyword id="KW-0645">Protease</keyword>
<keyword id="KW-1185">Reference proteome</keyword>
<keyword id="KW-0720">Serine protease</keyword>
<proteinExistence type="inferred from homology"/>
<feature type="chain" id="PRO_1000026082" description="ATP-dependent Clp protease proteolytic subunit">
    <location>
        <begin position="1"/>
        <end position="194"/>
    </location>
</feature>
<feature type="active site" description="Nucleophile" evidence="1">
    <location>
        <position position="98"/>
    </location>
</feature>
<feature type="active site" evidence="1">
    <location>
        <position position="123"/>
    </location>
</feature>
<gene>
    <name evidence="1" type="primary">clpP</name>
    <name type="ordered locus">CBO3231</name>
    <name type="ordered locus">CLC_3142</name>
</gene>
<evidence type="ECO:0000255" key="1">
    <source>
        <dbReference type="HAMAP-Rule" id="MF_00444"/>
    </source>
</evidence>
<organism>
    <name type="scientific">Clostridium botulinum (strain Hall / ATCC 3502 / NCTC 13319 / Type A)</name>
    <dbReference type="NCBI Taxonomy" id="441771"/>
    <lineage>
        <taxon>Bacteria</taxon>
        <taxon>Bacillati</taxon>
        <taxon>Bacillota</taxon>
        <taxon>Clostridia</taxon>
        <taxon>Eubacteriales</taxon>
        <taxon>Clostridiaceae</taxon>
        <taxon>Clostridium</taxon>
    </lineage>
</organism>